<comment type="catalytic activity">
    <reaction evidence="2">
        <text>L-arginine + H2O = urea + L-ornithine</text>
        <dbReference type="Rhea" id="RHEA:20569"/>
        <dbReference type="ChEBI" id="CHEBI:15377"/>
        <dbReference type="ChEBI" id="CHEBI:16199"/>
        <dbReference type="ChEBI" id="CHEBI:32682"/>
        <dbReference type="ChEBI" id="CHEBI:46911"/>
        <dbReference type="EC" id="3.5.3.1"/>
    </reaction>
</comment>
<comment type="cofactor">
    <cofactor evidence="4">
        <name>Mn(2+)</name>
        <dbReference type="ChEBI" id="CHEBI:29035"/>
    </cofactor>
    <text evidence="4">Binds 2 manganese ions per subunit.</text>
</comment>
<comment type="pathway">
    <text evidence="2">Nitrogen metabolism; urea cycle; L-ornithine and urea from L-arginine: step 1/1.</text>
</comment>
<comment type="subunit">
    <text evidence="1">Homotrimer.</text>
</comment>
<comment type="similarity">
    <text evidence="4">Belongs to the arginase family.</text>
</comment>
<keyword id="KW-0056">Arginine metabolism</keyword>
<keyword id="KW-0378">Hydrolase</keyword>
<keyword id="KW-0464">Manganese</keyword>
<keyword id="KW-0479">Metal-binding</keyword>
<keyword id="KW-1185">Reference proteome</keyword>
<keyword id="KW-0835">Urea cycle</keyword>
<dbReference type="EC" id="3.5.3.1" evidence="2"/>
<dbReference type="EMBL" id="X75559">
    <property type="protein sequence ID" value="CAA53236.1"/>
    <property type="molecule type" value="Genomic_DNA"/>
</dbReference>
<dbReference type="EMBL" id="CU329671">
    <property type="protein sequence ID" value="CAC08237.1"/>
    <property type="molecule type" value="Genomic_DNA"/>
</dbReference>
<dbReference type="PIR" id="S45455">
    <property type="entry name" value="S45455"/>
</dbReference>
<dbReference type="RefSeq" id="NP_595133.1">
    <property type="nucleotide sequence ID" value="NM_001021041.2"/>
</dbReference>
<dbReference type="SMR" id="P37818"/>
<dbReference type="BioGRID" id="277825">
    <property type="interactions" value="22"/>
</dbReference>
<dbReference type="FunCoup" id="P37818">
    <property type="interactions" value="471"/>
</dbReference>
<dbReference type="STRING" id="284812.P37818"/>
<dbReference type="iPTMnet" id="P37818"/>
<dbReference type="PaxDb" id="4896-SPBP26C9.02c.1"/>
<dbReference type="EnsemblFungi" id="SPBP26C9.02c.1">
    <property type="protein sequence ID" value="SPBP26C9.02c.1:pep"/>
    <property type="gene ID" value="SPBP26C9.02c"/>
</dbReference>
<dbReference type="GeneID" id="2541313"/>
<dbReference type="KEGG" id="spo:2541313"/>
<dbReference type="PomBase" id="SPBP26C9.02c">
    <property type="gene designation" value="car1"/>
</dbReference>
<dbReference type="VEuPathDB" id="FungiDB:SPBP26C9.02c"/>
<dbReference type="eggNOG" id="KOG2965">
    <property type="taxonomic scope" value="Eukaryota"/>
</dbReference>
<dbReference type="HOGENOM" id="CLU_039478_6_1_1"/>
<dbReference type="InParanoid" id="P37818"/>
<dbReference type="OMA" id="FSWMTPC"/>
<dbReference type="PhylomeDB" id="P37818"/>
<dbReference type="Reactome" id="R-SPO-70635">
    <property type="pathway name" value="Urea cycle"/>
</dbReference>
<dbReference type="Reactome" id="R-SPO-9837999">
    <property type="pathway name" value="Mitochondrial protein degradation"/>
</dbReference>
<dbReference type="UniPathway" id="UPA00158">
    <property type="reaction ID" value="UER00270"/>
</dbReference>
<dbReference type="PRO" id="PR:P37818"/>
<dbReference type="Proteomes" id="UP000002485">
    <property type="component" value="Chromosome II"/>
</dbReference>
<dbReference type="GO" id="GO:0005737">
    <property type="term" value="C:cytoplasm"/>
    <property type="evidence" value="ECO:0000318"/>
    <property type="project" value="GO_Central"/>
</dbReference>
<dbReference type="GO" id="GO:0005829">
    <property type="term" value="C:cytosol"/>
    <property type="evidence" value="ECO:0000316"/>
    <property type="project" value="PomBase"/>
</dbReference>
<dbReference type="GO" id="GO:0005634">
    <property type="term" value="C:nucleus"/>
    <property type="evidence" value="ECO:0007005"/>
    <property type="project" value="PomBase"/>
</dbReference>
<dbReference type="GO" id="GO:0004053">
    <property type="term" value="F:arginase activity"/>
    <property type="evidence" value="ECO:0000316"/>
    <property type="project" value="PomBase"/>
</dbReference>
<dbReference type="GO" id="GO:0030145">
    <property type="term" value="F:manganese ion binding"/>
    <property type="evidence" value="ECO:0000318"/>
    <property type="project" value="GO_Central"/>
</dbReference>
<dbReference type="GO" id="GO:0019547">
    <property type="term" value="P:arginine catabolic process to ornithine"/>
    <property type="evidence" value="ECO:0000316"/>
    <property type="project" value="PomBase"/>
</dbReference>
<dbReference type="GO" id="GO:0010121">
    <property type="term" value="P:arginine catabolic process to proline via ornithine"/>
    <property type="evidence" value="ECO:0000315"/>
    <property type="project" value="PomBase"/>
</dbReference>
<dbReference type="GO" id="GO:0000050">
    <property type="term" value="P:urea cycle"/>
    <property type="evidence" value="ECO:0000316"/>
    <property type="project" value="PomBase"/>
</dbReference>
<dbReference type="CDD" id="cd09989">
    <property type="entry name" value="Arginase"/>
    <property type="match status" value="1"/>
</dbReference>
<dbReference type="FunFam" id="3.40.800.10:FF:000005">
    <property type="entry name" value="Arginase"/>
    <property type="match status" value="1"/>
</dbReference>
<dbReference type="Gene3D" id="3.40.800.10">
    <property type="entry name" value="Ureohydrolase domain"/>
    <property type="match status" value="1"/>
</dbReference>
<dbReference type="InterPro" id="IPR014033">
    <property type="entry name" value="Arginase"/>
</dbReference>
<dbReference type="InterPro" id="IPR006035">
    <property type="entry name" value="Ureohydrolase"/>
</dbReference>
<dbReference type="InterPro" id="IPR023696">
    <property type="entry name" value="Ureohydrolase_dom_sf"/>
</dbReference>
<dbReference type="InterPro" id="IPR020855">
    <property type="entry name" value="Ureohydrolase_Mn_BS"/>
</dbReference>
<dbReference type="NCBIfam" id="TIGR01229">
    <property type="entry name" value="rocF_arginase"/>
    <property type="match status" value="1"/>
</dbReference>
<dbReference type="PANTHER" id="PTHR43782">
    <property type="entry name" value="ARGINASE"/>
    <property type="match status" value="1"/>
</dbReference>
<dbReference type="PANTHER" id="PTHR43782:SF3">
    <property type="entry name" value="ARGINASE"/>
    <property type="match status" value="1"/>
</dbReference>
<dbReference type="Pfam" id="PF00491">
    <property type="entry name" value="Arginase"/>
    <property type="match status" value="1"/>
</dbReference>
<dbReference type="PIRSF" id="PIRSF036979">
    <property type="entry name" value="Arginase"/>
    <property type="match status" value="1"/>
</dbReference>
<dbReference type="PRINTS" id="PR00116">
    <property type="entry name" value="ARGINASE"/>
</dbReference>
<dbReference type="SUPFAM" id="SSF52768">
    <property type="entry name" value="Arginase/deacetylase"/>
    <property type="match status" value="1"/>
</dbReference>
<dbReference type="PROSITE" id="PS01053">
    <property type="entry name" value="ARGINASE_1"/>
    <property type="match status" value="1"/>
</dbReference>
<dbReference type="PROSITE" id="PS51409">
    <property type="entry name" value="ARGINASE_2"/>
    <property type="match status" value="1"/>
</dbReference>
<evidence type="ECO:0000250" key="1"/>
<evidence type="ECO:0000250" key="2">
    <source>
        <dbReference type="UniProtKB" id="P05089"/>
    </source>
</evidence>
<evidence type="ECO:0000250" key="3">
    <source>
        <dbReference type="UniProtKB" id="P53608"/>
    </source>
</evidence>
<evidence type="ECO:0000255" key="4">
    <source>
        <dbReference type="PROSITE-ProRule" id="PRU00742"/>
    </source>
</evidence>
<accession>P37818</accession>
<organism>
    <name type="scientific">Schizosaccharomyces pombe (strain 972 / ATCC 24843)</name>
    <name type="common">Fission yeast</name>
    <dbReference type="NCBI Taxonomy" id="284812"/>
    <lineage>
        <taxon>Eukaryota</taxon>
        <taxon>Fungi</taxon>
        <taxon>Dikarya</taxon>
        <taxon>Ascomycota</taxon>
        <taxon>Taphrinomycotina</taxon>
        <taxon>Schizosaccharomycetes</taxon>
        <taxon>Schizosaccharomycetales</taxon>
        <taxon>Schizosaccharomycetaceae</taxon>
        <taxon>Schizosaccharomyces</taxon>
    </lineage>
</organism>
<gene>
    <name type="primary">car1</name>
    <name type="ORF">SPBP26C9.02c</name>
</gene>
<protein>
    <recommendedName>
        <fullName>Arginase</fullName>
        <ecNumber evidence="2">3.5.3.1</ecNumber>
    </recommendedName>
</protein>
<name>ARGI1_SCHPO</name>
<proteinExistence type="inferred from homology"/>
<sequence>MSPHKIPEVHRHIMSSRYMEGNAVSIINMPFSGGQPKDGAELAPEMIEAAGLPEDLERLGYSVNVVQNPKFKSRPLKEGPNQALMKNPLYVSNVTRQVRNIVQQELEKQRIAVNIGGDHSLAIGTVEGVQAVYDDACVLWIDAHADINTPDSSPSKNLHGCPLSFSLGYAEPLPEEFAWTRRVIEERRLAFIGLRDLDPMERAFLRERSITAYTMHDVDKYGIARVVEMALEHINPGRRRPIHLSFDVDACDPIVAPATGTRVPGGLTFREAMYICESVAETGSLVAVDVMEVNPLLGNKEEAKTTVDLARSIVRTCLGQTLL</sequence>
<feature type="chain" id="PRO_0000173709" description="Arginase">
    <location>
        <begin position="1"/>
        <end position="323"/>
    </location>
</feature>
<feature type="binding site" evidence="4">
    <location>
        <position position="119"/>
    </location>
    <ligand>
        <name>Mn(2+)</name>
        <dbReference type="ChEBI" id="CHEBI:29035"/>
        <label>1</label>
    </ligand>
</feature>
<feature type="binding site" evidence="4">
    <location>
        <position position="142"/>
    </location>
    <ligand>
        <name>Mn(2+)</name>
        <dbReference type="ChEBI" id="CHEBI:29035"/>
        <label>1</label>
    </ligand>
</feature>
<feature type="binding site" evidence="4">
    <location>
        <position position="142"/>
    </location>
    <ligand>
        <name>Mn(2+)</name>
        <dbReference type="ChEBI" id="CHEBI:29035"/>
        <label>2</label>
    </ligand>
</feature>
<feature type="binding site" evidence="3">
    <location>
        <begin position="144"/>
        <end position="148"/>
    </location>
    <ligand>
        <name>substrate</name>
    </ligand>
</feature>
<feature type="binding site" evidence="4">
    <location>
        <position position="144"/>
    </location>
    <ligand>
        <name>Mn(2+)</name>
        <dbReference type="ChEBI" id="CHEBI:29035"/>
        <label>2</label>
    </ligand>
</feature>
<feature type="binding site" evidence="4">
    <location>
        <position position="146"/>
    </location>
    <ligand>
        <name>Mn(2+)</name>
        <dbReference type="ChEBI" id="CHEBI:29035"/>
        <label>1</label>
    </ligand>
</feature>
<feature type="binding site" evidence="3">
    <location>
        <begin position="155"/>
        <end position="157"/>
    </location>
    <ligand>
        <name>substrate</name>
    </ligand>
</feature>
<feature type="binding site" evidence="3">
    <location>
        <position position="198"/>
    </location>
    <ligand>
        <name>substrate</name>
    </ligand>
</feature>
<feature type="binding site" evidence="4">
    <location>
        <position position="247"/>
    </location>
    <ligand>
        <name>Mn(2+)</name>
        <dbReference type="ChEBI" id="CHEBI:29035"/>
        <label>1</label>
    </ligand>
</feature>
<feature type="binding site" evidence="4">
    <location>
        <position position="247"/>
    </location>
    <ligand>
        <name>Mn(2+)</name>
        <dbReference type="ChEBI" id="CHEBI:29035"/>
        <label>2</label>
    </ligand>
</feature>
<feature type="binding site" evidence="4">
    <location>
        <position position="249"/>
    </location>
    <ligand>
        <name>Mn(2+)</name>
        <dbReference type="ChEBI" id="CHEBI:29035"/>
        <label>2</label>
    </ligand>
</feature>
<feature type="binding site" evidence="3">
    <location>
        <position position="261"/>
    </location>
    <ligand>
        <name>substrate</name>
    </ligand>
</feature>
<feature type="binding site" evidence="3">
    <location>
        <position position="292"/>
    </location>
    <ligand>
        <name>substrate</name>
    </ligand>
</feature>
<reference key="1">
    <citation type="journal article" date="1994" name="Yeast">
        <title>Cloning and sequencing of Schizosaccharomyces pombe car1 gene encoding arginase. Expression of the arginine anabolic and catabolic genes in response to arginine and related metabolites.</title>
        <authorList>
            <person name="van Huffel C.H."/>
            <person name="Dubois E."/>
            <person name="Messenguy F."/>
        </authorList>
    </citation>
    <scope>NUCLEOTIDE SEQUENCE [GENOMIC DNA]</scope>
    <source>
        <strain>972 / ATCC 24843</strain>
    </source>
</reference>
<reference key="2">
    <citation type="thesis" date="1993" institute="Universite Libre de Bruxelles" country="Belgium">
        <authorList>
            <person name="van Huffel C.H."/>
        </authorList>
    </citation>
    <scope>NUCLEOTIDE SEQUENCE [GENOMIC DNA]</scope>
    <source>
        <strain>972 / ATCC 24843</strain>
    </source>
</reference>
<reference key="3">
    <citation type="journal article" date="2002" name="Nature">
        <title>The genome sequence of Schizosaccharomyces pombe.</title>
        <authorList>
            <person name="Wood V."/>
            <person name="Gwilliam R."/>
            <person name="Rajandream M.A."/>
            <person name="Lyne M.H."/>
            <person name="Lyne R."/>
            <person name="Stewart A."/>
            <person name="Sgouros J.G."/>
            <person name="Peat N."/>
            <person name="Hayles J."/>
            <person name="Baker S.G."/>
            <person name="Basham D."/>
            <person name="Bowman S."/>
            <person name="Brooks K."/>
            <person name="Brown D."/>
            <person name="Brown S."/>
            <person name="Chillingworth T."/>
            <person name="Churcher C.M."/>
            <person name="Collins M."/>
            <person name="Connor R."/>
            <person name="Cronin A."/>
            <person name="Davis P."/>
            <person name="Feltwell T."/>
            <person name="Fraser A."/>
            <person name="Gentles S."/>
            <person name="Goble A."/>
            <person name="Hamlin N."/>
            <person name="Harris D.E."/>
            <person name="Hidalgo J."/>
            <person name="Hodgson G."/>
            <person name="Holroyd S."/>
            <person name="Hornsby T."/>
            <person name="Howarth S."/>
            <person name="Huckle E.J."/>
            <person name="Hunt S."/>
            <person name="Jagels K."/>
            <person name="James K.D."/>
            <person name="Jones L."/>
            <person name="Jones M."/>
            <person name="Leather S."/>
            <person name="McDonald S."/>
            <person name="McLean J."/>
            <person name="Mooney P."/>
            <person name="Moule S."/>
            <person name="Mungall K.L."/>
            <person name="Murphy L.D."/>
            <person name="Niblett D."/>
            <person name="Odell C."/>
            <person name="Oliver K."/>
            <person name="O'Neil S."/>
            <person name="Pearson D."/>
            <person name="Quail M.A."/>
            <person name="Rabbinowitsch E."/>
            <person name="Rutherford K.M."/>
            <person name="Rutter S."/>
            <person name="Saunders D."/>
            <person name="Seeger K."/>
            <person name="Sharp S."/>
            <person name="Skelton J."/>
            <person name="Simmonds M.N."/>
            <person name="Squares R."/>
            <person name="Squares S."/>
            <person name="Stevens K."/>
            <person name="Taylor K."/>
            <person name="Taylor R.G."/>
            <person name="Tivey A."/>
            <person name="Walsh S.V."/>
            <person name="Warren T."/>
            <person name="Whitehead S."/>
            <person name="Woodward J.R."/>
            <person name="Volckaert G."/>
            <person name="Aert R."/>
            <person name="Robben J."/>
            <person name="Grymonprez B."/>
            <person name="Weltjens I."/>
            <person name="Vanstreels E."/>
            <person name="Rieger M."/>
            <person name="Schaefer M."/>
            <person name="Mueller-Auer S."/>
            <person name="Gabel C."/>
            <person name="Fuchs M."/>
            <person name="Duesterhoeft A."/>
            <person name="Fritzc C."/>
            <person name="Holzer E."/>
            <person name="Moestl D."/>
            <person name="Hilbert H."/>
            <person name="Borzym K."/>
            <person name="Langer I."/>
            <person name="Beck A."/>
            <person name="Lehrach H."/>
            <person name="Reinhardt R."/>
            <person name="Pohl T.M."/>
            <person name="Eger P."/>
            <person name="Zimmermann W."/>
            <person name="Wedler H."/>
            <person name="Wambutt R."/>
            <person name="Purnelle B."/>
            <person name="Goffeau A."/>
            <person name="Cadieu E."/>
            <person name="Dreano S."/>
            <person name="Gloux S."/>
            <person name="Lelaure V."/>
            <person name="Mottier S."/>
            <person name="Galibert F."/>
            <person name="Aves S.J."/>
            <person name="Xiang Z."/>
            <person name="Hunt C."/>
            <person name="Moore K."/>
            <person name="Hurst S.M."/>
            <person name="Lucas M."/>
            <person name="Rochet M."/>
            <person name="Gaillardin C."/>
            <person name="Tallada V.A."/>
            <person name="Garzon A."/>
            <person name="Thode G."/>
            <person name="Daga R.R."/>
            <person name="Cruzado L."/>
            <person name="Jimenez J."/>
            <person name="Sanchez M."/>
            <person name="del Rey F."/>
            <person name="Benito J."/>
            <person name="Dominguez A."/>
            <person name="Revuelta J.L."/>
            <person name="Moreno S."/>
            <person name="Armstrong J."/>
            <person name="Forsburg S.L."/>
            <person name="Cerutti L."/>
            <person name="Lowe T."/>
            <person name="McCombie W.R."/>
            <person name="Paulsen I."/>
            <person name="Potashkin J."/>
            <person name="Shpakovski G.V."/>
            <person name="Ussery D."/>
            <person name="Barrell B.G."/>
            <person name="Nurse P."/>
        </authorList>
    </citation>
    <scope>NUCLEOTIDE SEQUENCE [LARGE SCALE GENOMIC DNA]</scope>
    <source>
        <strain>972 / ATCC 24843</strain>
    </source>
</reference>